<reference key="1">
    <citation type="journal article" date="2015" name="J. Med. Chem.">
        <title>Engineering potent and selective analogues of GpTx-1, a tarantula venom peptide antagonist of the Na(V)1.7 sodium channel.</title>
        <authorList>
            <person name="Murray J.K."/>
            <person name="Ligutti J."/>
            <person name="Liu D."/>
            <person name="Zou A."/>
            <person name="Poppe L."/>
            <person name="Li H."/>
            <person name="Andrews K.L."/>
            <person name="Moyer B.D."/>
            <person name="McDonough S.I."/>
            <person name="Favreau P."/>
            <person name="Stoecklin R."/>
            <person name="Miranda L.P."/>
        </authorList>
    </citation>
    <scope>PROTEIN SEQUENCE</scope>
    <scope>FUNCTION</scope>
    <scope>SYNTHESIS</scope>
    <scope>STRUCTURE BY NMR</scope>
    <scope>MUTAGENESIS OF ASP-1; LEU-3; GLY-4; PHE-5; MET-6; ARG-7; LYS-8; ILE-10; PRO-11; ASP-12; ASN-13; LYS-15; ARG-18; PRO-19; ASN-20; LEU-21; VAL-22; SER-24; ARG-25; THR-26; HIS-27; LYS-28; TRP-29; LYS-31; TYR-32; VAL-33 AND PHE-34</scope>
    <scope>AMIDATION AT PHE-34</scope>
    <scope>MASS SPECTROMETRY</scope>
    <source>
        <tissue>Venom</tissue>
    </source>
</reference>
<reference key="2">
    <citation type="journal article" date="2016" name="Toxins">
        <title>Analgesic effects of GpTx-1, PF-04856264 and CNV1014802 in a mouse model of Nav1.7-mediated pain.</title>
        <authorList>
            <person name="Deuis J.R."/>
            <person name="Wingerd J.S."/>
            <person name="Winter Z."/>
            <person name="Durek T."/>
            <person name="Dekan Z."/>
            <person name="Sousa S.R."/>
            <person name="Zimmermann K."/>
            <person name="Hoffmann T."/>
            <person name="Weidner C."/>
            <person name="Nassar M.A."/>
            <person name="Alewood P.F."/>
            <person name="Lewis R.J."/>
            <person name="Vetter I."/>
        </authorList>
    </citation>
    <scope>FUNCTION</scope>
</reference>
<accession>P0DL72</accession>
<comment type="function">
    <text evidence="1 2 3 4">Potent voltage-gated sodium channel blocker (PubMed:25658507). Potently inhibits the voltage-gated sodium channels Nav1.7/SCN9A (IC(50)=0.58-10 nM) (PubMed:25658507, PubMed:26999206). Also shows a moderate activity on Nav1.1/SCN1A (IC(50)=6 nM), Nav1.2/SCN2A (IC(50)=5-128 nM), Nav1.3/SCN3A (IC(50)=20.3-170 nM), and Nav1.6/SCN8A (IC(50)=17-20.1 nM) (PubMed:25658507, PubMed:26999206). Shows an unclear inhibition of Nav1.4/SCN4A (IC(50)=200 nM to &gt;10 uM), Nav1.5/SCN5A (IC(50)=140 nM to &gt;10 uM) and Nav1.8/SCN10A (IC(50)=68-12200 nM) (PubMed:25658507, PubMed:26999206). Weakly blocks the low voltage-gated calcium channels Cav3.1/CACNA1G (30% inhibition of the peak current at 9.8 nM) (By similarity). shows moderate affinity for lipid bilayers (By similarity). In vivo, when tested on the OD1-induced mouse model of Nav1.7/SCN9A-mediated pain, the toxin is effective when co-administered with OD1, but lacks efficacy when delivered systemically (PubMed:26999206).</text>
</comment>
<comment type="subcellular location">
    <subcellularLocation>
        <location evidence="3">Secreted</location>
    </subcellularLocation>
</comment>
<comment type="tissue specificity">
    <text evidence="7">Expressed by the venom gland.</text>
</comment>
<comment type="domain">
    <text evidence="3">The presence of a 'disulfide through disulfide knot' structurally defines this protein as a knottin.</text>
</comment>
<comment type="domain">
    <text evidence="3">This toxin is amphipathic in nature with a hydrophobic face on one side of the molecule (composed of residues 5-Phe-Met-6 and 27-His--Phe-34) and a hydrophilic (mostly cationic) face on the opposite side (composed of residues 10-Ile--Lys-15 and 18-Arg--Pro-19).</text>
</comment>
<comment type="mass spectrometry">
    <text>Average mass.</text>
</comment>
<comment type="miscellaneous">
    <text evidence="3">The mutant [Phe5Ala]GpTx1 may be used as a tool for probing Nav1.7/SCN9A inhibition in vivo.</text>
</comment>
<comment type="miscellaneous">
    <text evidence="6">The primary structure of the mature peptide is identical to that of Gtx1-15 from Grammostola rosea (AC P0DJA9) and Gtx1-15 from Paraphysa scrofa (AC P0DL73).</text>
</comment>
<comment type="similarity">
    <text evidence="6">Belongs to the neurotoxin 10 (Hwtx-1) family. 08 (Gtx1-15) subfamily.</text>
</comment>
<keyword id="KW-0002">3D-structure</keyword>
<keyword id="KW-0027">Amidation</keyword>
<keyword id="KW-0108">Calcium channel impairing toxin</keyword>
<keyword id="KW-0903">Direct protein sequencing</keyword>
<keyword id="KW-1015">Disulfide bond</keyword>
<keyword id="KW-0872">Ion channel impairing toxin</keyword>
<keyword id="KW-0960">Knottin</keyword>
<keyword id="KW-0528">Neurotoxin</keyword>
<keyword id="KW-0964">Secreted</keyword>
<keyword id="KW-0800">Toxin</keyword>
<keyword id="KW-1218">Voltage-gated calcium channel impairing toxin</keyword>
<keyword id="KW-0738">Voltage-gated sodium channel impairing toxin</keyword>
<feature type="chain" id="PRO_0000441929" description="Toxin GTx1-15" evidence="3">
    <location>
        <begin position="1"/>
        <end position="34"/>
    </location>
</feature>
<feature type="site" description="Important for activity and sodium channel selectivity" evidence="7">
    <location>
        <position position="5"/>
    </location>
</feature>
<feature type="site" description="Important for activity" evidence="7">
    <location>
        <position position="6"/>
    </location>
</feature>
<feature type="site" description="Important for activity and sodium channel selectivity" evidence="7">
    <location>
        <position position="26"/>
    </location>
</feature>
<feature type="site" description="Important for activity" evidence="7">
    <location>
        <position position="27"/>
    </location>
</feature>
<feature type="site" description="Important for activity and sodium channel selectivity" evidence="7">
    <location>
        <position position="28"/>
    </location>
</feature>
<feature type="site" description="Important for activity" evidence="7">
    <location>
        <position position="29"/>
    </location>
</feature>
<feature type="site" description="Important for activity" evidence="7">
    <location>
        <position position="31"/>
    </location>
</feature>
<feature type="site" description="Important for activity" evidence="7">
    <location>
        <position position="32"/>
    </location>
</feature>
<feature type="site" description="Important for activity" evidence="7">
    <location>
        <position position="34"/>
    </location>
</feature>
<feature type="modified residue" description="Phenylalanine amide" evidence="3">
    <location>
        <position position="34"/>
    </location>
</feature>
<feature type="disulfide bond" evidence="3">
    <location>
        <begin position="2"/>
        <end position="17"/>
    </location>
</feature>
<feature type="disulfide bond" evidence="3">
    <location>
        <begin position="9"/>
        <end position="23"/>
    </location>
</feature>
<feature type="disulfide bond" evidence="3">
    <location>
        <begin position="16"/>
        <end position="30"/>
    </location>
</feature>
<feature type="mutagenesis site" description="Decrease in selectivity for hNav1.7/SCN9A over hNav1.4/SCN4A. No change in activity on hNav1.7/SCN9A and hNav1.5/SCN5A and 1.5-fold increase in activity on hNav1.4/SCN4A." evidence="3">
    <original>D</original>
    <variation>A</variation>
    <location>
        <position position="1"/>
    </location>
</feature>
<feature type="mutagenesis site" description="4-fold decrease in activity on hNav1.7/SCN9A, no change on hNav1.5/SCN5A and loss of activity on hNav1.4/SCN4A." evidence="3">
    <original>D</original>
    <variation>AD</variation>
    <location>
        <position position="1"/>
    </location>
</feature>
<feature type="mutagenesis site" description="5-fold decrease in activity on hNav1.7/SCN9A, no change on hNav1.5/SCN5A and loss of activity on hNav1.4/SCN4A." evidence="3">
    <original>L</original>
    <variation>A</variation>
    <location>
        <position position="3"/>
    </location>
</feature>
<feature type="mutagenesis site" description="3-fold decrease in activity on hNav1.7/SCN9A, no change on hNav1.5/SCN5A and 1.2-fold decrease in activity on hNav1.4/SCN4A." evidence="3">
    <original>G</original>
    <variation>A</variation>
    <location>
        <position position="4"/>
    </location>
</feature>
<feature type="mutagenesis site" description="1200-fold increase in selectivity for hNav1.7/SCN9A over hNav1.4/SCN4A; compound 71." evidence="3">
    <original>FM</original>
    <variation>AF</variation>
    <location>
        <begin position="5"/>
        <end position="6"/>
    </location>
</feature>
<feature type="mutagenesis site" description="2.5-fold increase in selectivity for hNav1.7/SCN9A over hNav1.4/SCN4A. ~5-fold decrease in activity on hNav1.7/SCN9A, more than 5-fold decrease in activity on hNav1.5/SCN5A and ~25-fold decrease in activity on hNav1.4/SCN4A (depending on the method used). 3.6-fold decrease in activity on TTX-S sodium channels from mouse DRG neurons." evidence="3">
    <original>F</original>
    <variation>A</variation>
    <location>
        <position position="5"/>
    </location>
</feature>
<feature type="mutagenesis site" description="5-fold decrease in activity on hNav1.7/SCN9A, no change on hNav1.5/SCN5A and 1.4-fold decrease in activity on hNav1.4/SCN4A." evidence="3">
    <original>M</original>
    <variation>A</variation>
    <location>
        <position position="6"/>
    </location>
</feature>
<feature type="mutagenesis site" description="10-fold decrease in activity on hNav1.7/SCN9A, no change on hNav1.5/SCN5A and loss of activity on hNav1.4/SCN4A." evidence="3">
    <original>R</original>
    <variation>A</variation>
    <location>
        <position position="7"/>
    </location>
</feature>
<feature type="mutagenesis site" description="5-fold decrease in activity on hNav1.7/SCN9A, no change on hNav1.5/SCN5A and loss of activity on hNav1.4/SCN4A." evidence="3">
    <original>K</original>
    <variation>A</variation>
    <location>
        <position position="8"/>
    </location>
</feature>
<feature type="mutagenesis site" description="2-fold decrease in activity on hNav1.7/SCN9A, and no change on hNav1.5/SCN5A and hNav1.4/SCN4A." evidence="3">
    <original>I</original>
    <variation>A</variation>
    <location>
        <position position="10"/>
    </location>
</feature>
<feature type="mutagenesis site" description="No significant change on hNav1.7/SCN9A, hNav1.5/SCN5A and hNav1.4/SCN4A." evidence="3">
    <original>P</original>
    <variation>A</variation>
    <location>
        <position position="11"/>
    </location>
</feature>
<feature type="mutagenesis site" description="No change in activity on hNav1.7/SCN9A and hNav1.5/SCN5A and 3-fold increase in activity on hNav1.4/SCN4A." evidence="3">
    <original>D</original>
    <variation>A</variation>
    <location>
        <position position="12"/>
    </location>
</feature>
<feature type="mutagenesis site" description="2-fold decrease in activity on hNav1.7/SCN9A, no change on hNav1.5/SCN5A and hNav1.4/SCN4A." evidence="3">
    <original>N</original>
    <variation>A</variation>
    <location>
        <position position="13"/>
    </location>
</feature>
<feature type="mutagenesis site" description="3-fold decrease in activity on hNav1.7/SCN9A, no change on hNav1.5/SCN5A and 1.7-fold decrease in activity on hNav1.4/SCN4A." evidence="3">
    <original>K</original>
    <variation>A</variation>
    <location>
        <position position="15"/>
    </location>
</feature>
<feature type="mutagenesis site" description="No change in activity on hNav1.7/SCN9A and hNav1.4/SCN4A, and decrease in activity on hNav1.5/SCN5A." evidence="3">
    <original>R</original>
    <variation>A</variation>
    <location>
        <position position="18"/>
    </location>
</feature>
<feature type="mutagenesis site" description="No change in activity on hNav1.7/SCN9A, decrease in activity on hNav1.5/SCN5A, and 1.8-fold increase in activity on hNav1.4/SCN4A." evidence="3">
    <original>P</original>
    <variation>A</variation>
    <location>
        <position position="19"/>
    </location>
</feature>
<feature type="mutagenesis site" description="8-fold decrease in activity on hNav1.7/SCN9A, no change on hNav1.5/SCN5A and loss of activity on hNav1.4/SCN4A." evidence="3">
    <original>N</original>
    <variation>A</variation>
    <location>
        <position position="20"/>
    </location>
</feature>
<feature type="mutagenesis site" description="Decrease in activity on hNav1.7/SCN9A, hNav1.4/SCN4A, and hNav1.5/SCN5A." evidence="3">
    <original>L</original>
    <variation>A</variation>
    <location>
        <position position="21"/>
    </location>
</feature>
<feature type="mutagenesis site" description="4-fold decrease in activity on hNav1.7/SCN9A, no change on hNav1.5/SCN5A and 1.4-fold decrease in activity on hNav1.4/SCN4A." evidence="3">
    <original>V</original>
    <variation>A</variation>
    <location>
        <position position="22"/>
    </location>
</feature>
<feature type="mutagenesis site" description="5-fold decrease in activity on hNav1.7/SCN9A, no change on hNav1.5/SCN5A and 1.4-fold increase in activity on hNav1.4/SCN4A." evidence="3">
    <original>S</original>
    <variation>A</variation>
    <location>
        <position position="24"/>
    </location>
</feature>
<feature type="mutagenesis site" description="4-fold decrease in activity on hNav1.7/SCN9A, no change on hNav1.5/SCN5A and loss of activity on hNav1.4/SCN4A." evidence="3">
    <original>R</original>
    <variation>A</variation>
    <location>
        <position position="25"/>
    </location>
</feature>
<feature type="mutagenesis site" description="3-fold decrease in activity on hNav1.7/SCN9A, no change on hNav1.5/SCN5A and 1.2-fold decrease in activity on hNav1.4/SCN4A. 1200-fold increase in selectivity for hNav1.7/SCN9A over hNav1.4/SCN4A; compound 71." evidence="3">
    <original>T</original>
    <variation>A</variation>
    <location>
        <position position="26"/>
    </location>
</feature>
<feature type="mutagenesis site" description="11-fold decrease in activity on hNav1.7/SCN9A, no change on hNav1.5/SCN5A and 1.5-fold decrease in activity on hNav1.4/SCN4A." evidence="3">
    <original>H</original>
    <variation>A</variation>
    <location>
        <position position="27"/>
    </location>
</feature>
<feature type="mutagenesis site" description="5-fold decrease in activity on hNav1.7/SCN9A, no change on hNav1.5/SCN5A and loss of activity on hNav1.4/SCN4A. 1200-fold increase in selectivity for hNav1.7/SCN9A over hNav1.4/SCN4A; compound 71." evidence="3">
    <original>K</original>
    <variation>A</variation>
    <location>
        <position position="28"/>
    </location>
</feature>
<feature type="mutagenesis site" description="Loss of activity on hNav1.7/SCN9A and hNav1.4/SCN4A, and no change on hNav1.5/SCN5A." evidence="3">
    <original>W</original>
    <variation>A</variation>
    <location>
        <position position="29"/>
    </location>
</feature>
<feature type="mutagenesis site" description="Loss of activity on hNav1.7/SCN9A and hNav1.4/SCN4A, and no change on hNav1.5/SCN5A." evidence="3">
    <original>K</original>
    <variation>A</variation>
    <location>
        <position position="31"/>
    </location>
</feature>
<feature type="mutagenesis site" description="9-fold decrease in activity on hNav1.7/SCN9A, no change on hNav1.5/SCN5A and loss of activity on hNav1.4/SCN4A." evidence="3">
    <original>Y</original>
    <variation>A</variation>
    <location>
        <position position="32"/>
    </location>
</feature>
<feature type="mutagenesis site" description="2-fold decrease in activity on hNav1.7/SCN9A, no change on hNav1.5/SCN5A and 1.7-fold decrease in activity on hNav1.4/SCN4A." evidence="3">
    <original>V</original>
    <variation>A</variation>
    <location>
        <position position="33"/>
    </location>
</feature>
<feature type="mutagenesis site" description="13-fold decrease in activity on hNav1.7/SCN9A, no change on hNav1.5/SCN5A and loss of activity on hNav1.4/SCN4A." evidence="3">
    <original>F</original>
    <variation>A</variation>
    <location>
        <position position="34"/>
    </location>
</feature>
<feature type="mutagenesis site" description="5-fold decrease in activity on hNav1.7/SCN9A, no change on hNav1.5/SCN5A and loss of activity on hNav1.4/SCN4A." evidence="3">
    <original>F</original>
    <variation>FA</variation>
    <location>
        <position position="34"/>
    </location>
</feature>
<feature type="helix" evidence="8">
    <location>
        <begin position="11"/>
        <end position="13"/>
    </location>
</feature>
<feature type="turn" evidence="8">
    <location>
        <begin position="18"/>
        <end position="20"/>
    </location>
</feature>
<feature type="strand" evidence="8">
    <location>
        <begin position="21"/>
        <end position="24"/>
    </location>
</feature>
<feature type="turn" evidence="8">
    <location>
        <begin position="25"/>
        <end position="28"/>
    </location>
</feature>
<feature type="strand" evidence="8">
    <location>
        <begin position="29"/>
        <end position="32"/>
    </location>
</feature>
<sequence>DCLGFMRKCIPDNDKCCRPNLVCSRTHKWCKYVF</sequence>
<organism>
    <name type="scientific">Grammostola porteri</name>
    <name type="common">Tarantula spider</name>
    <name type="synonym">Lasiodora porteri</name>
    <dbReference type="NCBI Taxonomy" id="1749325"/>
    <lineage>
        <taxon>Eukaryota</taxon>
        <taxon>Metazoa</taxon>
        <taxon>Ecdysozoa</taxon>
        <taxon>Arthropoda</taxon>
        <taxon>Chelicerata</taxon>
        <taxon>Arachnida</taxon>
        <taxon>Araneae</taxon>
        <taxon>Mygalomorphae</taxon>
        <taxon>Theraphosidae</taxon>
        <taxon>Grammostola</taxon>
    </lineage>
</organism>
<evidence type="ECO:0000250" key="1">
    <source>
        <dbReference type="UniProtKB" id="P0DJA9"/>
    </source>
</evidence>
<evidence type="ECO:0000250" key="2">
    <source>
        <dbReference type="UniProtKB" id="P0DL73"/>
    </source>
</evidence>
<evidence type="ECO:0000269" key="3">
    <source>
    </source>
</evidence>
<evidence type="ECO:0000269" key="4">
    <source>
    </source>
</evidence>
<evidence type="ECO:0000303" key="5">
    <source>
    </source>
</evidence>
<evidence type="ECO:0000305" key="6"/>
<evidence type="ECO:0000305" key="7">
    <source>
    </source>
</evidence>
<evidence type="ECO:0007829" key="8">
    <source>
        <dbReference type="PDB" id="6MK5"/>
    </source>
</evidence>
<protein>
    <recommendedName>
        <fullName evidence="1">Toxin GTx1-15</fullName>
    </recommendedName>
    <alternativeName>
        <fullName evidence="6">Beta/omega-theraphotoxin-Gr2a</fullName>
        <shortName evidence="6">Beta/omega-TRTX-Gr2a</shortName>
    </alternativeName>
    <alternativeName>
        <fullName evidence="5">Toxin GpTx-1</fullName>
    </alternativeName>
</protein>
<proteinExistence type="evidence at protein level"/>
<name>TX15_GRAPO</name>
<dbReference type="PDB" id="6MK5">
    <property type="method" value="NMR"/>
    <property type="chains" value="A=1-34"/>
</dbReference>
<dbReference type="PDBsum" id="6MK5"/>
<dbReference type="BMRB" id="P0DL72"/>
<dbReference type="SMR" id="P0DL72"/>
<dbReference type="GO" id="GO:0005576">
    <property type="term" value="C:extracellular region"/>
    <property type="evidence" value="ECO:0007669"/>
    <property type="project" value="UniProtKB-SubCell"/>
</dbReference>
<dbReference type="GO" id="GO:0005246">
    <property type="term" value="F:calcium channel regulator activity"/>
    <property type="evidence" value="ECO:0007669"/>
    <property type="project" value="UniProtKB-KW"/>
</dbReference>
<dbReference type="GO" id="GO:0008200">
    <property type="term" value="F:ion channel inhibitor activity"/>
    <property type="evidence" value="ECO:0007669"/>
    <property type="project" value="InterPro"/>
</dbReference>
<dbReference type="GO" id="GO:0017080">
    <property type="term" value="F:sodium channel regulator activity"/>
    <property type="evidence" value="ECO:0007669"/>
    <property type="project" value="UniProtKB-KW"/>
</dbReference>
<dbReference type="GO" id="GO:0090729">
    <property type="term" value="F:toxin activity"/>
    <property type="evidence" value="ECO:0007669"/>
    <property type="project" value="UniProtKB-KW"/>
</dbReference>
<dbReference type="InterPro" id="IPR011696">
    <property type="entry name" value="Huwentoxin-1"/>
</dbReference>
<dbReference type="InterPro" id="IPR013140">
    <property type="entry name" value="Huwentoxin_CS1"/>
</dbReference>
<dbReference type="Pfam" id="PF07740">
    <property type="entry name" value="Toxin_12"/>
    <property type="match status" value="1"/>
</dbReference>
<dbReference type="SUPFAM" id="SSF57059">
    <property type="entry name" value="omega toxin-like"/>
    <property type="match status" value="1"/>
</dbReference>
<dbReference type="PROSITE" id="PS60021">
    <property type="entry name" value="HWTX_1"/>
    <property type="match status" value="1"/>
</dbReference>